<keyword id="KW-1003">Cell membrane</keyword>
<keyword id="KW-0221">Differentiation</keyword>
<keyword id="KW-1015">Disulfide bond</keyword>
<keyword id="KW-0245">EGF-like domain</keyword>
<keyword id="KW-0458">Lysosome</keyword>
<keyword id="KW-0472">Membrane</keyword>
<keyword id="KW-0539">Nucleus</keyword>
<keyword id="KW-1185">Reference proteome</keyword>
<keyword id="KW-0732">Signal</keyword>
<keyword id="KW-0812">Transmembrane</keyword>
<keyword id="KW-1133">Transmembrane helix</keyword>
<gene>
    <name type="primary">atraid</name>
    <name type="synonym">apr3</name>
    <name type="ORF">si:ch211-101l18.3</name>
</gene>
<name>ARAID_DANRE</name>
<accession>A3KNS9</accession>
<accession>Q502E7</accession>
<accession>Q5RID6</accession>
<evidence type="ECO:0000250" key="1"/>
<evidence type="ECO:0000250" key="2">
    <source>
        <dbReference type="UniProtKB" id="Q6UW56"/>
    </source>
</evidence>
<evidence type="ECO:0000255" key="3"/>
<evidence type="ECO:0000305" key="4"/>
<proteinExistence type="evidence at transcript level"/>
<feature type="signal peptide" evidence="3">
    <location>
        <begin position="1"/>
        <end position="26"/>
    </location>
</feature>
<feature type="chain" id="PRO_0000360984" description="All-trans retinoic acid-induced differentiation factor">
    <location>
        <begin position="27"/>
        <end position="230"/>
    </location>
</feature>
<feature type="topological domain" description="Extracellular" evidence="3">
    <location>
        <begin position="27"/>
        <end position="200"/>
    </location>
</feature>
<feature type="transmembrane region" description="Helical" evidence="3">
    <location>
        <begin position="201"/>
        <end position="221"/>
    </location>
</feature>
<feature type="topological domain" description="Cytoplasmic" evidence="3">
    <location>
        <begin position="222"/>
        <end position="230"/>
    </location>
</feature>
<feature type="domain" description="EGF-like">
    <location>
        <begin position="152"/>
        <end position="194"/>
    </location>
</feature>
<feature type="disulfide bond" evidence="1">
    <location>
        <begin position="156"/>
        <end position="172"/>
    </location>
</feature>
<feature type="disulfide bond" evidence="1">
    <location>
        <begin position="166"/>
        <end position="182"/>
    </location>
</feature>
<feature type="disulfide bond" evidence="1">
    <location>
        <begin position="184"/>
        <end position="193"/>
    </location>
</feature>
<feature type="sequence conflict" description="In Ref. 2; AAI33994." evidence="4" ref="2">
    <original>N</original>
    <variation>H</variation>
    <location>
        <position position="187"/>
    </location>
</feature>
<organism>
    <name type="scientific">Danio rerio</name>
    <name type="common">Zebrafish</name>
    <name type="synonym">Brachydanio rerio</name>
    <dbReference type="NCBI Taxonomy" id="7955"/>
    <lineage>
        <taxon>Eukaryota</taxon>
        <taxon>Metazoa</taxon>
        <taxon>Chordata</taxon>
        <taxon>Craniata</taxon>
        <taxon>Vertebrata</taxon>
        <taxon>Euteleostomi</taxon>
        <taxon>Actinopterygii</taxon>
        <taxon>Neopterygii</taxon>
        <taxon>Teleostei</taxon>
        <taxon>Ostariophysi</taxon>
        <taxon>Cypriniformes</taxon>
        <taxon>Danionidae</taxon>
        <taxon>Danioninae</taxon>
        <taxon>Danio</taxon>
    </lineage>
</organism>
<protein>
    <recommendedName>
        <fullName>All-trans retinoic acid-induced differentiation factor</fullName>
    </recommendedName>
    <alternativeName>
        <fullName>Apoptosis-related protein 3</fullName>
        <shortName>APR-3</shortName>
    </alternativeName>
</protein>
<sequence>MTANVTVSSMYLFTVLLLLFNVYVNSQDTDAQLCQMCEGTIRHDSPVWSFCITKGYVKGHCCFKNNTSDVDTIIGLDLSNCSISHVEHLYNSSTALIIDLSNNPISNLSDYVFQGFSQLTQLLLPSKLECPGGRASWEKVEVKSITRICEGQKNACNQTVQMPLVCPENSLCSPYGPGFFECSCLNNFHGYKCMRQGEFPLVKVLGILTASTVVVSSVLWFTQRRKVKNT</sequence>
<comment type="function">
    <text evidence="1">Involved in osteoblast cell differentiation. May play a role in inducing the cell cycle arrest (By similarity).</text>
</comment>
<comment type="subcellular location">
    <subcellularLocation>
        <location evidence="2">Nucleus envelope</location>
    </subcellularLocation>
    <subcellularLocation>
        <location evidence="2">Cell membrane</location>
        <topology evidence="2">Single-pass membrane protein</topology>
    </subcellularLocation>
    <subcellularLocation>
        <location evidence="2">Lysosome membrane</location>
        <topology evidence="3">Multi-pass membrane protein</topology>
    </subcellularLocation>
    <text evidence="2">Colocalizes with NELL1 on the nuclear envelope and the perinuclear region.</text>
</comment>
<comment type="sequence caution" evidence="4">
    <conflict type="erroneous initiation">
        <sequence resource="EMBL-CDS" id="AAH95730"/>
    </conflict>
    <text>Extended N-terminus.</text>
</comment>
<dbReference type="EMBL" id="BX276101">
    <property type="protein sequence ID" value="CAI11536.1"/>
    <property type="molecule type" value="Genomic_DNA"/>
</dbReference>
<dbReference type="EMBL" id="BC095730">
    <property type="protein sequence ID" value="AAH95730.1"/>
    <property type="status" value="ALT_INIT"/>
    <property type="molecule type" value="mRNA"/>
</dbReference>
<dbReference type="EMBL" id="BC133993">
    <property type="protein sequence ID" value="AAI33994.1"/>
    <property type="molecule type" value="mRNA"/>
</dbReference>
<dbReference type="RefSeq" id="NP_001038238.1">
    <property type="nucleotide sequence ID" value="NM_001044773.1"/>
</dbReference>
<dbReference type="FunCoup" id="A3KNS9">
    <property type="interactions" value="850"/>
</dbReference>
<dbReference type="STRING" id="7955.ENSDARP00000063695"/>
<dbReference type="PaxDb" id="7955-ENSDARP00000063695"/>
<dbReference type="Ensembl" id="ENSDART00000063696">
    <property type="protein sequence ID" value="ENSDARP00000063695"/>
    <property type="gene ID" value="ENSDARG00000043388"/>
</dbReference>
<dbReference type="GeneID" id="553468"/>
<dbReference type="KEGG" id="dre:553468"/>
<dbReference type="AGR" id="ZFIN:ZDB-GENE-040724-177"/>
<dbReference type="CTD" id="51374"/>
<dbReference type="ZFIN" id="ZDB-GENE-040724-177">
    <property type="gene designation" value="atraid"/>
</dbReference>
<dbReference type="eggNOG" id="ENOG502S1YR">
    <property type="taxonomic scope" value="Eukaryota"/>
</dbReference>
<dbReference type="HOGENOM" id="CLU_086391_0_0_1"/>
<dbReference type="InParanoid" id="A3KNS9"/>
<dbReference type="OMA" id="KMAPHGP"/>
<dbReference type="OrthoDB" id="9989713at2759"/>
<dbReference type="PhylomeDB" id="A3KNS9"/>
<dbReference type="TreeFam" id="TF335766"/>
<dbReference type="PRO" id="PR:A3KNS9"/>
<dbReference type="Proteomes" id="UP000000437">
    <property type="component" value="Chromosome 20"/>
</dbReference>
<dbReference type="Bgee" id="ENSDARG00000043388">
    <property type="expression patterns" value="Expressed in brain and 22 other cell types or tissues"/>
</dbReference>
<dbReference type="GO" id="GO:0043231">
    <property type="term" value="C:intracellular membrane-bounded organelle"/>
    <property type="evidence" value="ECO:0000318"/>
    <property type="project" value="GO_Central"/>
</dbReference>
<dbReference type="GO" id="GO:0005765">
    <property type="term" value="C:lysosomal membrane"/>
    <property type="evidence" value="ECO:0007669"/>
    <property type="project" value="UniProtKB-SubCell"/>
</dbReference>
<dbReference type="GO" id="GO:0005635">
    <property type="term" value="C:nuclear envelope"/>
    <property type="evidence" value="ECO:0000250"/>
    <property type="project" value="UniProtKB"/>
</dbReference>
<dbReference type="GO" id="GO:0048471">
    <property type="term" value="C:perinuclear region of cytoplasm"/>
    <property type="evidence" value="ECO:0000250"/>
    <property type="project" value="UniProtKB"/>
</dbReference>
<dbReference type="GO" id="GO:0005886">
    <property type="term" value="C:plasma membrane"/>
    <property type="evidence" value="ECO:0007669"/>
    <property type="project" value="UniProtKB-SubCell"/>
</dbReference>
<dbReference type="GO" id="GO:0030154">
    <property type="term" value="P:cell differentiation"/>
    <property type="evidence" value="ECO:0007669"/>
    <property type="project" value="UniProtKB-KW"/>
</dbReference>
<dbReference type="GO" id="GO:0033689">
    <property type="term" value="P:negative regulation of osteoblast proliferation"/>
    <property type="evidence" value="ECO:0000250"/>
    <property type="project" value="UniProtKB"/>
</dbReference>
<dbReference type="GO" id="GO:0042177">
    <property type="term" value="P:negative regulation of protein catabolic process"/>
    <property type="evidence" value="ECO:0000250"/>
    <property type="project" value="UniProtKB"/>
</dbReference>
<dbReference type="GO" id="GO:0030501">
    <property type="term" value="P:positive regulation of bone mineralization"/>
    <property type="evidence" value="ECO:0000250"/>
    <property type="project" value="UniProtKB"/>
</dbReference>
<dbReference type="GO" id="GO:0045669">
    <property type="term" value="P:positive regulation of osteoblast differentiation"/>
    <property type="evidence" value="ECO:0000250"/>
    <property type="project" value="UniProtKB"/>
</dbReference>
<dbReference type="GO" id="GO:0010468">
    <property type="term" value="P:regulation of gene expression"/>
    <property type="evidence" value="ECO:0000250"/>
    <property type="project" value="UniProtKB"/>
</dbReference>
<dbReference type="Gene3D" id="3.80.10.10">
    <property type="entry name" value="Ribonuclease Inhibitor"/>
    <property type="match status" value="1"/>
</dbReference>
<dbReference type="InterPro" id="IPR042350">
    <property type="entry name" value="ATRAID"/>
</dbReference>
<dbReference type="InterPro" id="IPR000742">
    <property type="entry name" value="EGF-like_dom"/>
</dbReference>
<dbReference type="InterPro" id="IPR032675">
    <property type="entry name" value="LRR_dom_sf"/>
</dbReference>
<dbReference type="PANTHER" id="PTHR15926">
    <property type="entry name" value="ALL-TRANS RETINOIC ACID-INDUCED DIFFERENTIATION FACTOR"/>
    <property type="match status" value="1"/>
</dbReference>
<dbReference type="PANTHER" id="PTHR15926:SF1">
    <property type="entry name" value="ALL-TRANS RETINOIC ACID-INDUCED DIFFERENTIATION FACTOR"/>
    <property type="match status" value="1"/>
</dbReference>
<dbReference type="SUPFAM" id="SSF52058">
    <property type="entry name" value="L domain-like"/>
    <property type="match status" value="1"/>
</dbReference>
<dbReference type="PROSITE" id="PS00022">
    <property type="entry name" value="EGF_1"/>
    <property type="match status" value="1"/>
</dbReference>
<reference key="1">
    <citation type="journal article" date="2013" name="Nature">
        <title>The zebrafish reference genome sequence and its relationship to the human genome.</title>
        <authorList>
            <person name="Howe K."/>
            <person name="Clark M.D."/>
            <person name="Torroja C.F."/>
            <person name="Torrance J."/>
            <person name="Berthelot C."/>
            <person name="Muffato M."/>
            <person name="Collins J.E."/>
            <person name="Humphray S."/>
            <person name="McLaren K."/>
            <person name="Matthews L."/>
            <person name="McLaren S."/>
            <person name="Sealy I."/>
            <person name="Caccamo M."/>
            <person name="Churcher C."/>
            <person name="Scott C."/>
            <person name="Barrett J.C."/>
            <person name="Koch R."/>
            <person name="Rauch G.J."/>
            <person name="White S."/>
            <person name="Chow W."/>
            <person name="Kilian B."/>
            <person name="Quintais L.T."/>
            <person name="Guerra-Assuncao J.A."/>
            <person name="Zhou Y."/>
            <person name="Gu Y."/>
            <person name="Yen J."/>
            <person name="Vogel J.H."/>
            <person name="Eyre T."/>
            <person name="Redmond S."/>
            <person name="Banerjee R."/>
            <person name="Chi J."/>
            <person name="Fu B."/>
            <person name="Langley E."/>
            <person name="Maguire S.F."/>
            <person name="Laird G.K."/>
            <person name="Lloyd D."/>
            <person name="Kenyon E."/>
            <person name="Donaldson S."/>
            <person name="Sehra H."/>
            <person name="Almeida-King J."/>
            <person name="Loveland J."/>
            <person name="Trevanion S."/>
            <person name="Jones M."/>
            <person name="Quail M."/>
            <person name="Willey D."/>
            <person name="Hunt A."/>
            <person name="Burton J."/>
            <person name="Sims S."/>
            <person name="McLay K."/>
            <person name="Plumb B."/>
            <person name="Davis J."/>
            <person name="Clee C."/>
            <person name="Oliver K."/>
            <person name="Clark R."/>
            <person name="Riddle C."/>
            <person name="Elliot D."/>
            <person name="Threadgold G."/>
            <person name="Harden G."/>
            <person name="Ware D."/>
            <person name="Begum S."/>
            <person name="Mortimore B."/>
            <person name="Kerry G."/>
            <person name="Heath P."/>
            <person name="Phillimore B."/>
            <person name="Tracey A."/>
            <person name="Corby N."/>
            <person name="Dunn M."/>
            <person name="Johnson C."/>
            <person name="Wood J."/>
            <person name="Clark S."/>
            <person name="Pelan S."/>
            <person name="Griffiths G."/>
            <person name="Smith M."/>
            <person name="Glithero R."/>
            <person name="Howden P."/>
            <person name="Barker N."/>
            <person name="Lloyd C."/>
            <person name="Stevens C."/>
            <person name="Harley J."/>
            <person name="Holt K."/>
            <person name="Panagiotidis G."/>
            <person name="Lovell J."/>
            <person name="Beasley H."/>
            <person name="Henderson C."/>
            <person name="Gordon D."/>
            <person name="Auger K."/>
            <person name="Wright D."/>
            <person name="Collins J."/>
            <person name="Raisen C."/>
            <person name="Dyer L."/>
            <person name="Leung K."/>
            <person name="Robertson L."/>
            <person name="Ambridge K."/>
            <person name="Leongamornlert D."/>
            <person name="McGuire S."/>
            <person name="Gilderthorp R."/>
            <person name="Griffiths C."/>
            <person name="Manthravadi D."/>
            <person name="Nichol S."/>
            <person name="Barker G."/>
            <person name="Whitehead S."/>
            <person name="Kay M."/>
            <person name="Brown J."/>
            <person name="Murnane C."/>
            <person name="Gray E."/>
            <person name="Humphries M."/>
            <person name="Sycamore N."/>
            <person name="Barker D."/>
            <person name="Saunders D."/>
            <person name="Wallis J."/>
            <person name="Babbage A."/>
            <person name="Hammond S."/>
            <person name="Mashreghi-Mohammadi M."/>
            <person name="Barr L."/>
            <person name="Martin S."/>
            <person name="Wray P."/>
            <person name="Ellington A."/>
            <person name="Matthews N."/>
            <person name="Ellwood M."/>
            <person name="Woodmansey R."/>
            <person name="Clark G."/>
            <person name="Cooper J."/>
            <person name="Tromans A."/>
            <person name="Grafham D."/>
            <person name="Skuce C."/>
            <person name="Pandian R."/>
            <person name="Andrews R."/>
            <person name="Harrison E."/>
            <person name="Kimberley A."/>
            <person name="Garnett J."/>
            <person name="Fosker N."/>
            <person name="Hall R."/>
            <person name="Garner P."/>
            <person name="Kelly D."/>
            <person name="Bird C."/>
            <person name="Palmer S."/>
            <person name="Gehring I."/>
            <person name="Berger A."/>
            <person name="Dooley C.M."/>
            <person name="Ersan-Urun Z."/>
            <person name="Eser C."/>
            <person name="Geiger H."/>
            <person name="Geisler M."/>
            <person name="Karotki L."/>
            <person name="Kirn A."/>
            <person name="Konantz J."/>
            <person name="Konantz M."/>
            <person name="Oberlander M."/>
            <person name="Rudolph-Geiger S."/>
            <person name="Teucke M."/>
            <person name="Lanz C."/>
            <person name="Raddatz G."/>
            <person name="Osoegawa K."/>
            <person name="Zhu B."/>
            <person name="Rapp A."/>
            <person name="Widaa S."/>
            <person name="Langford C."/>
            <person name="Yang F."/>
            <person name="Schuster S.C."/>
            <person name="Carter N.P."/>
            <person name="Harrow J."/>
            <person name="Ning Z."/>
            <person name="Herrero J."/>
            <person name="Searle S.M."/>
            <person name="Enright A."/>
            <person name="Geisler R."/>
            <person name="Plasterk R.H."/>
            <person name="Lee C."/>
            <person name="Westerfield M."/>
            <person name="de Jong P.J."/>
            <person name="Zon L.I."/>
            <person name="Postlethwait J.H."/>
            <person name="Nusslein-Volhard C."/>
            <person name="Hubbard T.J."/>
            <person name="Roest Crollius H."/>
            <person name="Rogers J."/>
            <person name="Stemple D.L."/>
        </authorList>
    </citation>
    <scope>NUCLEOTIDE SEQUENCE [LARGE SCALE GENOMIC DNA]</scope>
    <source>
        <strain>Tuebingen</strain>
    </source>
</reference>
<reference key="2">
    <citation type="submission" date="2007-03" db="EMBL/GenBank/DDBJ databases">
        <authorList>
            <consortium name="NIH - Zebrafish Gene Collection (ZGC) project"/>
        </authorList>
    </citation>
    <scope>NUCLEOTIDE SEQUENCE [LARGE SCALE MRNA]</scope>
    <source>
        <tissue>Embryo</tissue>
        <tissue>Liver</tissue>
    </source>
</reference>